<gene>
    <name evidence="1" type="primary">plsY1</name>
    <name type="ordered locus">RL1737</name>
</gene>
<accession>Q1MIH8</accession>
<feature type="chain" id="PRO_0000250321" description="Glycerol-3-phosphate acyltransferase 1">
    <location>
        <begin position="1"/>
        <end position="206"/>
    </location>
</feature>
<feature type="transmembrane region" description="Helical" evidence="1">
    <location>
        <begin position="14"/>
        <end position="34"/>
    </location>
</feature>
<feature type="transmembrane region" description="Helical" evidence="1">
    <location>
        <begin position="67"/>
        <end position="87"/>
    </location>
</feature>
<feature type="transmembrane region" description="Helical" evidence="1">
    <location>
        <begin position="91"/>
        <end position="111"/>
    </location>
</feature>
<feature type="transmembrane region" description="Helical" evidence="1">
    <location>
        <begin position="124"/>
        <end position="144"/>
    </location>
</feature>
<feature type="transmembrane region" description="Helical" evidence="1">
    <location>
        <begin position="148"/>
        <end position="168"/>
    </location>
</feature>
<organism>
    <name type="scientific">Rhizobium johnstonii (strain DSM 114642 / LMG 32736 / 3841)</name>
    <name type="common">Rhizobium leguminosarum bv. viciae</name>
    <dbReference type="NCBI Taxonomy" id="216596"/>
    <lineage>
        <taxon>Bacteria</taxon>
        <taxon>Pseudomonadati</taxon>
        <taxon>Pseudomonadota</taxon>
        <taxon>Alphaproteobacteria</taxon>
        <taxon>Hyphomicrobiales</taxon>
        <taxon>Rhizobiaceae</taxon>
        <taxon>Rhizobium/Agrobacterium group</taxon>
        <taxon>Rhizobium</taxon>
        <taxon>Rhizobium johnstonii</taxon>
    </lineage>
</organism>
<sequence length="206" mass="21531">MLSNLMSWQITLPIALAAAIIGYLFGSIPFGLILTRAAGLGDVRSIGSGNIGATNVLRTGNRTLAAATLLLDALKASAAAWVVSYFLGEEAAIIAGFFAFIGHLFPVWIGFKGGKGVATYIGTLLGVAPIMVVLFAAVWLAVAFTTRYSSLSALVAMLVIPVALWILGNEKVAAVMAIMTLISYWKHKANISRLMGGTESKIGAKG</sequence>
<dbReference type="EC" id="2.3.1.275" evidence="1"/>
<dbReference type="EMBL" id="AM236080">
    <property type="protein sequence ID" value="CAK07232.1"/>
    <property type="molecule type" value="Genomic_DNA"/>
</dbReference>
<dbReference type="SMR" id="Q1MIH8"/>
<dbReference type="EnsemblBacteria" id="CAK07232">
    <property type="protein sequence ID" value="CAK07232"/>
    <property type="gene ID" value="RL1737"/>
</dbReference>
<dbReference type="KEGG" id="rle:RL1737"/>
<dbReference type="eggNOG" id="COG0344">
    <property type="taxonomic scope" value="Bacteria"/>
</dbReference>
<dbReference type="HOGENOM" id="CLU_081254_1_0_5"/>
<dbReference type="UniPathway" id="UPA00085"/>
<dbReference type="Proteomes" id="UP000006575">
    <property type="component" value="Chromosome"/>
</dbReference>
<dbReference type="GO" id="GO:0005886">
    <property type="term" value="C:plasma membrane"/>
    <property type="evidence" value="ECO:0007669"/>
    <property type="project" value="UniProtKB-SubCell"/>
</dbReference>
<dbReference type="GO" id="GO:0043772">
    <property type="term" value="F:acyl-phosphate glycerol-3-phosphate acyltransferase activity"/>
    <property type="evidence" value="ECO:0007669"/>
    <property type="project" value="UniProtKB-UniRule"/>
</dbReference>
<dbReference type="GO" id="GO:0008654">
    <property type="term" value="P:phospholipid biosynthetic process"/>
    <property type="evidence" value="ECO:0007669"/>
    <property type="project" value="UniProtKB-UniRule"/>
</dbReference>
<dbReference type="HAMAP" id="MF_01043">
    <property type="entry name" value="PlsY"/>
    <property type="match status" value="1"/>
</dbReference>
<dbReference type="InterPro" id="IPR003811">
    <property type="entry name" value="G3P_acylTferase_PlsY"/>
</dbReference>
<dbReference type="NCBIfam" id="TIGR00023">
    <property type="entry name" value="glycerol-3-phosphate 1-O-acyltransferase PlsY"/>
    <property type="match status" value="1"/>
</dbReference>
<dbReference type="PANTHER" id="PTHR30309:SF0">
    <property type="entry name" value="GLYCEROL-3-PHOSPHATE ACYLTRANSFERASE-RELATED"/>
    <property type="match status" value="1"/>
</dbReference>
<dbReference type="PANTHER" id="PTHR30309">
    <property type="entry name" value="INNER MEMBRANE PROTEIN YGIH"/>
    <property type="match status" value="1"/>
</dbReference>
<dbReference type="Pfam" id="PF02660">
    <property type="entry name" value="G3P_acyltransf"/>
    <property type="match status" value="1"/>
</dbReference>
<dbReference type="SMART" id="SM01207">
    <property type="entry name" value="G3P_acyltransf"/>
    <property type="match status" value="1"/>
</dbReference>
<evidence type="ECO:0000255" key="1">
    <source>
        <dbReference type="HAMAP-Rule" id="MF_01043"/>
    </source>
</evidence>
<name>PLSY1_RHIJ3</name>
<reference key="1">
    <citation type="journal article" date="2006" name="Genome Biol.">
        <title>The genome of Rhizobium leguminosarum has recognizable core and accessory components.</title>
        <authorList>
            <person name="Young J.P.W."/>
            <person name="Crossman L.C."/>
            <person name="Johnston A.W.B."/>
            <person name="Thomson N.R."/>
            <person name="Ghazoui Z.F."/>
            <person name="Hull K.H."/>
            <person name="Wexler M."/>
            <person name="Curson A.R.J."/>
            <person name="Todd J.D."/>
            <person name="Poole P.S."/>
            <person name="Mauchline T.H."/>
            <person name="East A.K."/>
            <person name="Quail M.A."/>
            <person name="Churcher C."/>
            <person name="Arrowsmith C."/>
            <person name="Cherevach I."/>
            <person name="Chillingworth T."/>
            <person name="Clarke K."/>
            <person name="Cronin A."/>
            <person name="Davis P."/>
            <person name="Fraser A."/>
            <person name="Hance Z."/>
            <person name="Hauser H."/>
            <person name="Jagels K."/>
            <person name="Moule S."/>
            <person name="Mungall K."/>
            <person name="Norbertczak H."/>
            <person name="Rabbinowitsch E."/>
            <person name="Sanders M."/>
            <person name="Simmonds M."/>
            <person name="Whitehead S."/>
            <person name="Parkhill J."/>
        </authorList>
    </citation>
    <scope>NUCLEOTIDE SEQUENCE [LARGE SCALE GENOMIC DNA]</scope>
    <source>
        <strain>DSM 114642 / LMG 32736 / 3841</strain>
    </source>
</reference>
<proteinExistence type="inferred from homology"/>
<comment type="function">
    <text evidence="1">Catalyzes the transfer of an acyl group from acyl-phosphate (acyl-PO(4)) to glycerol-3-phosphate (G3P) to form lysophosphatidic acid (LPA). This enzyme utilizes acyl-phosphate as fatty acyl donor, but not acyl-CoA or acyl-ACP.</text>
</comment>
<comment type="catalytic activity">
    <reaction evidence="1">
        <text>an acyl phosphate + sn-glycerol 3-phosphate = a 1-acyl-sn-glycero-3-phosphate + phosphate</text>
        <dbReference type="Rhea" id="RHEA:34075"/>
        <dbReference type="ChEBI" id="CHEBI:43474"/>
        <dbReference type="ChEBI" id="CHEBI:57597"/>
        <dbReference type="ChEBI" id="CHEBI:57970"/>
        <dbReference type="ChEBI" id="CHEBI:59918"/>
        <dbReference type="EC" id="2.3.1.275"/>
    </reaction>
</comment>
<comment type="pathway">
    <text evidence="1">Lipid metabolism; phospholipid metabolism.</text>
</comment>
<comment type="subunit">
    <text evidence="1">Probably interacts with PlsX.</text>
</comment>
<comment type="subcellular location">
    <subcellularLocation>
        <location evidence="1">Cell inner membrane</location>
        <topology evidence="1">Multi-pass membrane protein</topology>
    </subcellularLocation>
</comment>
<comment type="similarity">
    <text evidence="1">Belongs to the PlsY family.</text>
</comment>
<keyword id="KW-0997">Cell inner membrane</keyword>
<keyword id="KW-1003">Cell membrane</keyword>
<keyword id="KW-0444">Lipid biosynthesis</keyword>
<keyword id="KW-0443">Lipid metabolism</keyword>
<keyword id="KW-0472">Membrane</keyword>
<keyword id="KW-0594">Phospholipid biosynthesis</keyword>
<keyword id="KW-1208">Phospholipid metabolism</keyword>
<keyword id="KW-0808">Transferase</keyword>
<keyword id="KW-0812">Transmembrane</keyword>
<keyword id="KW-1133">Transmembrane helix</keyword>
<protein>
    <recommendedName>
        <fullName evidence="1">Glycerol-3-phosphate acyltransferase 1</fullName>
    </recommendedName>
    <alternativeName>
        <fullName evidence="1">Acyl-PO4 G3P acyltransferase 1</fullName>
    </alternativeName>
    <alternativeName>
        <fullName evidence="1">Acyl-phosphate--glycerol-3-phosphate acyltransferase 1</fullName>
    </alternativeName>
    <alternativeName>
        <fullName evidence="1">G3P acyltransferase 1</fullName>
        <shortName evidence="1">GPAT 1</shortName>
        <ecNumber evidence="1">2.3.1.275</ecNumber>
    </alternativeName>
    <alternativeName>
        <fullName evidence="1">Lysophosphatidic acid synthase 1</fullName>
        <shortName evidence="1">LPA synthase 1</shortName>
    </alternativeName>
</protein>